<organism>
    <name type="scientific">Arabidopsis thaliana</name>
    <name type="common">Mouse-ear cress</name>
    <dbReference type="NCBI Taxonomy" id="3702"/>
    <lineage>
        <taxon>Eukaryota</taxon>
        <taxon>Viridiplantae</taxon>
        <taxon>Streptophyta</taxon>
        <taxon>Embryophyta</taxon>
        <taxon>Tracheophyta</taxon>
        <taxon>Spermatophyta</taxon>
        <taxon>Magnoliopsida</taxon>
        <taxon>eudicotyledons</taxon>
        <taxon>Gunneridae</taxon>
        <taxon>Pentapetalae</taxon>
        <taxon>rosids</taxon>
        <taxon>malvids</taxon>
        <taxon>Brassicales</taxon>
        <taxon>Brassicaceae</taxon>
        <taxon>Camelineae</taxon>
        <taxon>Arabidopsis</taxon>
    </lineage>
</organism>
<dbReference type="EMBL" id="AC007592">
    <property type="protein sequence ID" value="AAF24821.1"/>
    <property type="status" value="ALT_SEQ"/>
    <property type="molecule type" value="Genomic_DNA"/>
</dbReference>
<dbReference type="EMBL" id="CP002684">
    <property type="protein sequence ID" value="AEE27990.1"/>
    <property type="molecule type" value="Genomic_DNA"/>
</dbReference>
<dbReference type="EMBL" id="CP002684">
    <property type="protein sequence ID" value="AEE27991.1"/>
    <property type="molecule type" value="Genomic_DNA"/>
</dbReference>
<dbReference type="EMBL" id="CP002684">
    <property type="protein sequence ID" value="ANM59499.1"/>
    <property type="molecule type" value="Genomic_DNA"/>
</dbReference>
<dbReference type="EMBL" id="CP002684">
    <property type="protein sequence ID" value="ANM59500.1"/>
    <property type="molecule type" value="Genomic_DNA"/>
</dbReference>
<dbReference type="EMBL" id="BT000433">
    <property type="protein sequence ID" value="AAN17410.1"/>
    <property type="molecule type" value="mRNA"/>
</dbReference>
<dbReference type="EMBL" id="BT003372">
    <property type="protein sequence ID" value="AAO30035.1"/>
    <property type="molecule type" value="mRNA"/>
</dbReference>
<dbReference type="PIR" id="E86200">
    <property type="entry name" value="E86200"/>
</dbReference>
<dbReference type="RefSeq" id="NP_001318934.1">
    <property type="nucleotide sequence ID" value="NM_001331630.1"/>
</dbReference>
<dbReference type="RefSeq" id="NP_001321854.1">
    <property type="nucleotide sequence ID" value="NM_001331631.1"/>
</dbReference>
<dbReference type="RefSeq" id="NP_172135.2">
    <property type="nucleotide sequence ID" value="NM_100527.3"/>
</dbReference>
<dbReference type="RefSeq" id="NP_973772.1">
    <property type="nucleotide sequence ID" value="NM_202043.3"/>
</dbReference>
<dbReference type="SMR" id="Q8H184"/>
<dbReference type="FunCoup" id="Q8H184">
    <property type="interactions" value="3803"/>
</dbReference>
<dbReference type="STRING" id="3702.Q8H184"/>
<dbReference type="iPTMnet" id="Q8H184"/>
<dbReference type="PaxDb" id="3702-AT1G06470.2"/>
<dbReference type="ProteomicsDB" id="248775"/>
<dbReference type="EnsemblPlants" id="AT1G06470.1">
    <property type="protein sequence ID" value="AT1G06470.1"/>
    <property type="gene ID" value="AT1G06470"/>
</dbReference>
<dbReference type="EnsemblPlants" id="AT1G06470.2">
    <property type="protein sequence ID" value="AT1G06470.2"/>
    <property type="gene ID" value="AT1G06470"/>
</dbReference>
<dbReference type="EnsemblPlants" id="AT1G06470.3">
    <property type="protein sequence ID" value="AT1G06470.3"/>
    <property type="gene ID" value="AT1G06470"/>
</dbReference>
<dbReference type="EnsemblPlants" id="AT1G06470.4">
    <property type="protein sequence ID" value="AT1G06470.4"/>
    <property type="gene ID" value="AT1G06470"/>
</dbReference>
<dbReference type="GeneID" id="837159"/>
<dbReference type="Gramene" id="AT1G06470.1">
    <property type="protein sequence ID" value="AT1G06470.1"/>
    <property type="gene ID" value="AT1G06470"/>
</dbReference>
<dbReference type="Gramene" id="AT1G06470.2">
    <property type="protein sequence ID" value="AT1G06470.2"/>
    <property type="gene ID" value="AT1G06470"/>
</dbReference>
<dbReference type="Gramene" id="AT1G06470.3">
    <property type="protein sequence ID" value="AT1G06470.3"/>
    <property type="gene ID" value="AT1G06470"/>
</dbReference>
<dbReference type="Gramene" id="AT1G06470.4">
    <property type="protein sequence ID" value="AT1G06470.4"/>
    <property type="gene ID" value="AT1G06470"/>
</dbReference>
<dbReference type="KEGG" id="ath:AT1G06470"/>
<dbReference type="Araport" id="AT1G06470"/>
<dbReference type="TAIR" id="AT1G06470"/>
<dbReference type="eggNOG" id="KOG1443">
    <property type="taxonomic scope" value="Eukaryota"/>
</dbReference>
<dbReference type="HOGENOM" id="CLU_022332_1_2_1"/>
<dbReference type="InParanoid" id="Q8H184"/>
<dbReference type="OMA" id="AHLMGDQ"/>
<dbReference type="PhylomeDB" id="Q8H184"/>
<dbReference type="PRO" id="PR:Q8H184"/>
<dbReference type="Proteomes" id="UP000006548">
    <property type="component" value="Chromosome 1"/>
</dbReference>
<dbReference type="ExpressionAtlas" id="Q8H184">
    <property type="expression patterns" value="baseline and differential"/>
</dbReference>
<dbReference type="GO" id="GO:0016020">
    <property type="term" value="C:membrane"/>
    <property type="evidence" value="ECO:0007669"/>
    <property type="project" value="UniProtKB-SubCell"/>
</dbReference>
<dbReference type="InterPro" id="IPR004853">
    <property type="entry name" value="Sugar_P_trans_dom"/>
</dbReference>
<dbReference type="InterPro" id="IPR050186">
    <property type="entry name" value="TPT_transporter"/>
</dbReference>
<dbReference type="PANTHER" id="PTHR11132">
    <property type="entry name" value="SOLUTE CARRIER FAMILY 35"/>
    <property type="match status" value="1"/>
</dbReference>
<dbReference type="Pfam" id="PF03151">
    <property type="entry name" value="TPT"/>
    <property type="match status" value="1"/>
</dbReference>
<proteinExistence type="evidence at transcript level"/>
<gene>
    <name type="ordered locus">At1g06470</name>
    <name type="ORF">F12K11.18</name>
</gene>
<accession>Q8H184</accession>
<accession>Q84WH7</accession>
<accession>Q9SHJ2</accession>
<name>PT106_ARATH</name>
<evidence type="ECO:0000255" key="1"/>
<evidence type="ECO:0000305" key="2"/>
<keyword id="KW-0472">Membrane</keyword>
<keyword id="KW-1185">Reference proteome</keyword>
<keyword id="KW-0762">Sugar transport</keyword>
<keyword id="KW-0812">Transmembrane</keyword>
<keyword id="KW-1133">Transmembrane helix</keyword>
<keyword id="KW-0813">Transport</keyword>
<comment type="subcellular location">
    <subcellularLocation>
        <location evidence="2">Membrane</location>
        <topology evidence="2">Multi-pass membrane protein</topology>
    </subcellularLocation>
</comment>
<comment type="similarity">
    <text evidence="2">Belongs to the TPT transporter family. TPT (TC 2.A.7.9) subfamily.</text>
</comment>
<comment type="sequence caution" evidence="2">
    <conflict type="erroneous gene model prediction">
        <sequence resource="EMBL-CDS" id="AAF24821"/>
    </conflict>
</comment>
<feature type="chain" id="PRO_0000406105" description="Probable sugar phosphate/phosphate translocator At1g06470">
    <location>
        <begin position="1"/>
        <end position="414"/>
    </location>
</feature>
<feature type="transmembrane region" description="Helical" evidence="1">
    <location>
        <begin position="72"/>
        <end position="92"/>
    </location>
</feature>
<feature type="transmembrane region" description="Helical" evidence="1">
    <location>
        <begin position="101"/>
        <end position="121"/>
    </location>
</feature>
<feature type="transmembrane region" description="Helical" evidence="1">
    <location>
        <begin position="172"/>
        <end position="192"/>
    </location>
</feature>
<feature type="transmembrane region" description="Helical" evidence="1">
    <location>
        <begin position="197"/>
        <end position="217"/>
    </location>
</feature>
<feature type="transmembrane region" description="Helical" evidence="1">
    <location>
        <begin position="224"/>
        <end position="244"/>
    </location>
</feature>
<feature type="transmembrane region" description="Helical" evidence="1">
    <location>
        <begin position="259"/>
        <end position="279"/>
    </location>
</feature>
<feature type="transmembrane region" description="Helical" evidence="1">
    <location>
        <begin position="303"/>
        <end position="323"/>
    </location>
</feature>
<feature type="transmembrane region" description="Helical" evidence="1">
    <location>
        <begin position="328"/>
        <end position="348"/>
    </location>
</feature>
<feature type="transmembrane region" description="Helical" evidence="1">
    <location>
        <begin position="354"/>
        <end position="374"/>
    </location>
</feature>
<feature type="domain" description="EamA">
    <location>
        <begin position="106"/>
        <end position="216"/>
    </location>
</feature>
<feature type="sequence conflict" description="In Ref. 3; AAO30035." evidence="2" ref="3">
    <original>V</original>
    <variation>L</variation>
    <location>
        <position position="5"/>
    </location>
</feature>
<reference key="1">
    <citation type="journal article" date="2000" name="Nature">
        <title>Sequence and analysis of chromosome 1 of the plant Arabidopsis thaliana.</title>
        <authorList>
            <person name="Theologis A."/>
            <person name="Ecker J.R."/>
            <person name="Palm C.J."/>
            <person name="Federspiel N.A."/>
            <person name="Kaul S."/>
            <person name="White O."/>
            <person name="Alonso J."/>
            <person name="Altafi H."/>
            <person name="Araujo R."/>
            <person name="Bowman C.L."/>
            <person name="Brooks S.Y."/>
            <person name="Buehler E."/>
            <person name="Chan A."/>
            <person name="Chao Q."/>
            <person name="Chen H."/>
            <person name="Cheuk R.F."/>
            <person name="Chin C.W."/>
            <person name="Chung M.K."/>
            <person name="Conn L."/>
            <person name="Conway A.B."/>
            <person name="Conway A.R."/>
            <person name="Creasy T.H."/>
            <person name="Dewar K."/>
            <person name="Dunn P."/>
            <person name="Etgu P."/>
            <person name="Feldblyum T.V."/>
            <person name="Feng J.-D."/>
            <person name="Fong B."/>
            <person name="Fujii C.Y."/>
            <person name="Gill J.E."/>
            <person name="Goldsmith A.D."/>
            <person name="Haas B."/>
            <person name="Hansen N.F."/>
            <person name="Hughes B."/>
            <person name="Huizar L."/>
            <person name="Hunter J.L."/>
            <person name="Jenkins J."/>
            <person name="Johnson-Hopson C."/>
            <person name="Khan S."/>
            <person name="Khaykin E."/>
            <person name="Kim C.J."/>
            <person name="Koo H.L."/>
            <person name="Kremenetskaia I."/>
            <person name="Kurtz D.B."/>
            <person name="Kwan A."/>
            <person name="Lam B."/>
            <person name="Langin-Hooper S."/>
            <person name="Lee A."/>
            <person name="Lee J.M."/>
            <person name="Lenz C.A."/>
            <person name="Li J.H."/>
            <person name="Li Y.-P."/>
            <person name="Lin X."/>
            <person name="Liu S.X."/>
            <person name="Liu Z.A."/>
            <person name="Luros J.S."/>
            <person name="Maiti R."/>
            <person name="Marziali A."/>
            <person name="Militscher J."/>
            <person name="Miranda M."/>
            <person name="Nguyen M."/>
            <person name="Nierman W.C."/>
            <person name="Osborne B.I."/>
            <person name="Pai G."/>
            <person name="Peterson J."/>
            <person name="Pham P.K."/>
            <person name="Rizzo M."/>
            <person name="Rooney T."/>
            <person name="Rowley D."/>
            <person name="Sakano H."/>
            <person name="Salzberg S.L."/>
            <person name="Schwartz J.R."/>
            <person name="Shinn P."/>
            <person name="Southwick A.M."/>
            <person name="Sun H."/>
            <person name="Tallon L.J."/>
            <person name="Tambunga G."/>
            <person name="Toriumi M.J."/>
            <person name="Town C.D."/>
            <person name="Utterback T."/>
            <person name="Van Aken S."/>
            <person name="Vaysberg M."/>
            <person name="Vysotskaia V.S."/>
            <person name="Walker M."/>
            <person name="Wu D."/>
            <person name="Yu G."/>
            <person name="Fraser C.M."/>
            <person name="Venter J.C."/>
            <person name="Davis R.W."/>
        </authorList>
    </citation>
    <scope>NUCLEOTIDE SEQUENCE [LARGE SCALE GENOMIC DNA]</scope>
    <source>
        <strain>cv. Columbia</strain>
    </source>
</reference>
<reference key="2">
    <citation type="journal article" date="2017" name="Plant J.">
        <title>Araport11: a complete reannotation of the Arabidopsis thaliana reference genome.</title>
        <authorList>
            <person name="Cheng C.Y."/>
            <person name="Krishnakumar V."/>
            <person name="Chan A.P."/>
            <person name="Thibaud-Nissen F."/>
            <person name="Schobel S."/>
            <person name="Town C.D."/>
        </authorList>
    </citation>
    <scope>GENOME REANNOTATION</scope>
    <source>
        <strain>cv. Columbia</strain>
    </source>
</reference>
<reference key="3">
    <citation type="journal article" date="2003" name="Science">
        <title>Empirical analysis of transcriptional activity in the Arabidopsis genome.</title>
        <authorList>
            <person name="Yamada K."/>
            <person name="Lim J."/>
            <person name="Dale J.M."/>
            <person name="Chen H."/>
            <person name="Shinn P."/>
            <person name="Palm C.J."/>
            <person name="Southwick A.M."/>
            <person name="Wu H.C."/>
            <person name="Kim C.J."/>
            <person name="Nguyen M."/>
            <person name="Pham P.K."/>
            <person name="Cheuk R.F."/>
            <person name="Karlin-Newmann G."/>
            <person name="Liu S.X."/>
            <person name="Lam B."/>
            <person name="Sakano H."/>
            <person name="Wu T."/>
            <person name="Yu G."/>
            <person name="Miranda M."/>
            <person name="Quach H.L."/>
            <person name="Tripp M."/>
            <person name="Chang C.H."/>
            <person name="Lee J.M."/>
            <person name="Toriumi M.J."/>
            <person name="Chan M.M."/>
            <person name="Tang C.C."/>
            <person name="Onodera C.S."/>
            <person name="Deng J.M."/>
            <person name="Akiyama K."/>
            <person name="Ansari Y."/>
            <person name="Arakawa T."/>
            <person name="Banh J."/>
            <person name="Banno F."/>
            <person name="Bowser L."/>
            <person name="Brooks S.Y."/>
            <person name="Carninci P."/>
            <person name="Chao Q."/>
            <person name="Choy N."/>
            <person name="Enju A."/>
            <person name="Goldsmith A.D."/>
            <person name="Gurjal M."/>
            <person name="Hansen N.F."/>
            <person name="Hayashizaki Y."/>
            <person name="Johnson-Hopson C."/>
            <person name="Hsuan V.W."/>
            <person name="Iida K."/>
            <person name="Karnes M."/>
            <person name="Khan S."/>
            <person name="Koesema E."/>
            <person name="Ishida J."/>
            <person name="Jiang P.X."/>
            <person name="Jones T."/>
            <person name="Kawai J."/>
            <person name="Kamiya A."/>
            <person name="Meyers C."/>
            <person name="Nakajima M."/>
            <person name="Narusaka M."/>
            <person name="Seki M."/>
            <person name="Sakurai T."/>
            <person name="Satou M."/>
            <person name="Tamse R."/>
            <person name="Vaysberg M."/>
            <person name="Wallender E.K."/>
            <person name="Wong C."/>
            <person name="Yamamura Y."/>
            <person name="Yuan S."/>
            <person name="Shinozaki K."/>
            <person name="Davis R.W."/>
            <person name="Theologis A."/>
            <person name="Ecker J.R."/>
        </authorList>
    </citation>
    <scope>NUCLEOTIDE SEQUENCE [LARGE SCALE MRNA]</scope>
    <source>
        <strain>cv. Columbia</strain>
    </source>
</reference>
<reference key="4">
    <citation type="journal article" date="2014" name="Proc. Natl. Acad. Sci. U.S.A.">
        <title>The Golgi localized bifunctional UDP-rhamnose/UDP-galactose transporter family of Arabidopsis.</title>
        <authorList>
            <person name="Rautengarten C."/>
            <person name="Ebert B."/>
            <person name="Moreno I."/>
            <person name="Temple H."/>
            <person name="Herter T."/>
            <person name="Link B."/>
            <person name="Donas-Cofre D."/>
            <person name="Moreno A."/>
            <person name="Saez-Aguayo S."/>
            <person name="Blanco F."/>
            <person name="Mortimer J.C."/>
            <person name="Schultink A."/>
            <person name="Reiter W.D."/>
            <person name="Dupree P."/>
            <person name="Pauly M."/>
            <person name="Heazlewood J.L."/>
            <person name="Scheller H.V."/>
            <person name="Orellana A."/>
        </authorList>
    </citation>
    <scope>GENE FAMILY</scope>
</reference>
<sequence>MEQRVQLRVGTMETISNEGDVDREQVLETFGIENETGKETNGSRSFDVGYSSGDTLETLPKASKVDISPADVLKTLFFILVWYTFSTFLTLYNKTLLGDDLGKFPAPLLMNTIHFSIQAVLSKMITWYWSGRFQPDVTISWRDYFVRVVPTALGTAMDINLSNESLVFISVTFATMCKSAAPIFLLLFAFAFRLESPSLKLFGIISVISAGVLLTVAKETEFEFWGFVFVMLAAVMSGFRWCMTQVLLQKETFGLKNPFIFMSCVAPVMAIATGLLSLLLDPWSEFRDNKYFDSGAHFARTCFLMLFGGALAFCMVLTEYVLVSVTSAVTVTIAGVVKEAVTIVVAVFYFHDEFTWLKGVGLMIIMVGVSLFNWYKYDKLQKGHKTEEEKQLQAPSQTGKYVILDEMDDQENSP</sequence>
<protein>
    <recommendedName>
        <fullName>Probable sugar phosphate/phosphate translocator At1g06470</fullName>
    </recommendedName>
</protein>